<gene>
    <name evidence="5" type="primary">glnA</name>
    <name type="ordered locus">MMP1206</name>
</gene>
<feature type="chain" id="PRO_0000153205" description="Glutamine synthetase">
    <location>
        <begin position="1"/>
        <end position="446"/>
    </location>
</feature>
<feature type="domain" description="GS beta-grasp" evidence="6">
    <location>
        <begin position="14"/>
        <end position="106"/>
    </location>
</feature>
<feature type="domain" description="GS catalytic" evidence="7">
    <location>
        <begin position="113"/>
        <end position="446"/>
    </location>
</feature>
<feature type="binding site" evidence="4">
    <location>
        <position position="137"/>
    </location>
    <ligand>
        <name>Mg(2+)</name>
        <dbReference type="ChEBI" id="CHEBI:18420"/>
        <label>1</label>
    </ligand>
</feature>
<feature type="binding site" evidence="4">
    <location>
        <position position="139"/>
    </location>
    <ligand>
        <name>Mg(2+)</name>
        <dbReference type="ChEBI" id="CHEBI:18420"/>
        <label>2</label>
    </ligand>
</feature>
<feature type="binding site" evidence="4">
    <location>
        <position position="187"/>
    </location>
    <ligand>
        <name>ATP</name>
        <dbReference type="ChEBI" id="CHEBI:30616"/>
    </ligand>
</feature>
<feature type="binding site" evidence="4">
    <location>
        <position position="192"/>
    </location>
    <ligand>
        <name>Mg(2+)</name>
        <dbReference type="ChEBI" id="CHEBI:18420"/>
        <label>2</label>
    </ligand>
</feature>
<feature type="binding site" evidence="4">
    <location>
        <position position="199"/>
    </location>
    <ligand>
        <name>Mg(2+)</name>
        <dbReference type="ChEBI" id="CHEBI:18420"/>
        <label>2</label>
    </ligand>
</feature>
<feature type="binding site" evidence="4">
    <location>
        <begin position="243"/>
        <end position="244"/>
    </location>
    <ligand>
        <name>L-glutamate</name>
        <dbReference type="ChEBI" id="CHEBI:29985"/>
    </ligand>
</feature>
<feature type="binding site" evidence="2">
    <location>
        <position position="244"/>
    </location>
    <ligand>
        <name>L-glutamate</name>
        <dbReference type="ChEBI" id="CHEBI:29985"/>
    </ligand>
</feature>
<feature type="binding site" evidence="4">
    <location>
        <position position="248"/>
    </location>
    <ligand>
        <name>Mg(2+)</name>
        <dbReference type="ChEBI" id="CHEBI:18420"/>
        <label>1</label>
    </ligand>
</feature>
<feature type="binding site" evidence="4">
    <location>
        <begin position="250"/>
        <end position="252"/>
    </location>
    <ligand>
        <name>ATP</name>
        <dbReference type="ChEBI" id="CHEBI:30616"/>
    </ligand>
</feature>
<feature type="binding site" evidence="3">
    <location>
        <position position="252"/>
    </location>
    <ligand>
        <name>ATP</name>
        <dbReference type="ChEBI" id="CHEBI:30616"/>
    </ligand>
</feature>
<feature type="binding site" evidence="4">
    <location>
        <position position="301"/>
    </location>
    <ligand>
        <name>L-glutamate</name>
        <dbReference type="ChEBI" id="CHEBI:29985"/>
    </ligand>
</feature>
<feature type="binding site" evidence="1">
    <location>
        <position position="307"/>
    </location>
    <ligand>
        <name>L-glutamate</name>
        <dbReference type="ChEBI" id="CHEBI:29985"/>
    </ligand>
</feature>
<feature type="binding site" evidence="4">
    <location>
        <position position="319"/>
    </location>
    <ligand>
        <name>ATP</name>
        <dbReference type="ChEBI" id="CHEBI:30616"/>
    </ligand>
</feature>
<feature type="binding site" evidence="4">
    <location>
        <position position="319"/>
    </location>
    <ligand>
        <name>L-glutamate</name>
        <dbReference type="ChEBI" id="CHEBI:29985"/>
    </ligand>
</feature>
<feature type="binding site" evidence="4">
    <location>
        <position position="324"/>
    </location>
    <ligand>
        <name>ATP</name>
        <dbReference type="ChEBI" id="CHEBI:30616"/>
    </ligand>
</feature>
<feature type="binding site" evidence="3">
    <location>
        <position position="331"/>
    </location>
    <ligand>
        <name>ATP</name>
        <dbReference type="ChEBI" id="CHEBI:30616"/>
    </ligand>
</feature>
<feature type="binding site" evidence="4">
    <location>
        <position position="336"/>
    </location>
    <ligand>
        <name>Mg(2+)</name>
        <dbReference type="ChEBI" id="CHEBI:18420"/>
        <label>1</label>
    </ligand>
</feature>
<feature type="binding site" evidence="4">
    <location>
        <position position="338"/>
    </location>
    <ligand>
        <name>L-glutamate</name>
        <dbReference type="ChEBI" id="CHEBI:29985"/>
    </ligand>
</feature>
<reference key="1">
    <citation type="journal article" date="1999" name="J. Bacteriol.">
        <title>Function and regulation of glnA in the methanogenic archaeon Methanococcus maripaludis.</title>
        <authorList>
            <person name="Cohen-Kupiec R."/>
            <person name="Marx C.J."/>
            <person name="Leigh J.A."/>
        </authorList>
    </citation>
    <scope>NUCLEOTIDE SEQUENCE [GENOMIC DNA]</scope>
    <source>
        <strain>DSM 14266 / JCM 13030 / NBRC 101832 / S2 / LL</strain>
    </source>
</reference>
<reference key="2">
    <citation type="journal article" date="2004" name="J. Bacteriol.">
        <title>Complete genome sequence of the genetically tractable hydrogenotrophic methanogen Methanococcus maripaludis.</title>
        <authorList>
            <person name="Hendrickson E.L."/>
            <person name="Kaul R."/>
            <person name="Zhou Y."/>
            <person name="Bovee D."/>
            <person name="Chapman P."/>
            <person name="Chung J."/>
            <person name="Conway de Macario E."/>
            <person name="Dodsworth J.A."/>
            <person name="Gillett W."/>
            <person name="Graham D.E."/>
            <person name="Hackett M."/>
            <person name="Haydock A.K."/>
            <person name="Kang A."/>
            <person name="Land M.L."/>
            <person name="Levy R."/>
            <person name="Lie T.J."/>
            <person name="Major T.A."/>
            <person name="Moore B.C."/>
            <person name="Porat I."/>
            <person name="Palmeiri A."/>
            <person name="Rouse G."/>
            <person name="Saenphimmachak C."/>
            <person name="Soell D."/>
            <person name="Van Dien S."/>
            <person name="Wang T."/>
            <person name="Whitman W.B."/>
            <person name="Xia Q."/>
            <person name="Zhang Y."/>
            <person name="Larimer F.W."/>
            <person name="Olson M.V."/>
            <person name="Leigh J.A."/>
        </authorList>
    </citation>
    <scope>NUCLEOTIDE SEQUENCE [LARGE SCALE GENOMIC DNA]</scope>
    <source>
        <strain>DSM 14266 / JCM 13030 / NBRC 101832 / S2 / LL</strain>
    </source>
</reference>
<dbReference type="EC" id="6.3.1.2" evidence="5"/>
<dbReference type="EMBL" id="AF062391">
    <property type="protein sequence ID" value="AAD04845.1"/>
    <property type="molecule type" value="Genomic_DNA"/>
</dbReference>
<dbReference type="EMBL" id="BX950229">
    <property type="protein sequence ID" value="CAF30762.1"/>
    <property type="molecule type" value="Genomic_DNA"/>
</dbReference>
<dbReference type="RefSeq" id="WP_011171150.1">
    <property type="nucleotide sequence ID" value="NC_005791.1"/>
</dbReference>
<dbReference type="SMR" id="O59648"/>
<dbReference type="STRING" id="267377.MMP1206"/>
<dbReference type="EnsemblBacteria" id="CAF30762">
    <property type="protein sequence ID" value="CAF30762"/>
    <property type="gene ID" value="MMP1206"/>
</dbReference>
<dbReference type="GeneID" id="41279785"/>
<dbReference type="KEGG" id="mmp:MMP1206"/>
<dbReference type="PATRIC" id="fig|267377.15.peg.1239"/>
<dbReference type="eggNOG" id="arCOG01909">
    <property type="taxonomic scope" value="Archaea"/>
</dbReference>
<dbReference type="HOGENOM" id="CLU_017290_1_3_2"/>
<dbReference type="OrthoDB" id="36124at2157"/>
<dbReference type="Proteomes" id="UP000000590">
    <property type="component" value="Chromosome"/>
</dbReference>
<dbReference type="GO" id="GO:0005737">
    <property type="term" value="C:cytoplasm"/>
    <property type="evidence" value="ECO:0007669"/>
    <property type="project" value="UniProtKB-SubCell"/>
</dbReference>
<dbReference type="GO" id="GO:0005524">
    <property type="term" value="F:ATP binding"/>
    <property type="evidence" value="ECO:0007669"/>
    <property type="project" value="UniProtKB-KW"/>
</dbReference>
<dbReference type="GO" id="GO:0004356">
    <property type="term" value="F:glutamine synthetase activity"/>
    <property type="evidence" value="ECO:0007669"/>
    <property type="project" value="UniProtKB-EC"/>
</dbReference>
<dbReference type="GO" id="GO:0046872">
    <property type="term" value="F:metal ion binding"/>
    <property type="evidence" value="ECO:0007669"/>
    <property type="project" value="UniProtKB-KW"/>
</dbReference>
<dbReference type="GO" id="GO:0006542">
    <property type="term" value="P:glutamine biosynthetic process"/>
    <property type="evidence" value="ECO:0007669"/>
    <property type="project" value="InterPro"/>
</dbReference>
<dbReference type="FunFam" id="3.30.590.10:FF:000003">
    <property type="entry name" value="Glutamine synthetase 2"/>
    <property type="match status" value="1"/>
</dbReference>
<dbReference type="Gene3D" id="3.10.20.70">
    <property type="entry name" value="Glutamine synthetase, N-terminal domain"/>
    <property type="match status" value="1"/>
</dbReference>
<dbReference type="Gene3D" id="3.30.590.10">
    <property type="entry name" value="Glutamine synthetase/guanido kinase, catalytic domain"/>
    <property type="match status" value="1"/>
</dbReference>
<dbReference type="InterPro" id="IPR008147">
    <property type="entry name" value="Gln_synt_N"/>
</dbReference>
<dbReference type="InterPro" id="IPR036651">
    <property type="entry name" value="Gln_synt_N_sf"/>
</dbReference>
<dbReference type="InterPro" id="IPR014746">
    <property type="entry name" value="Gln_synth/guanido_kin_cat_dom"/>
</dbReference>
<dbReference type="InterPro" id="IPR008146">
    <property type="entry name" value="Gln_synth_cat_dom"/>
</dbReference>
<dbReference type="InterPro" id="IPR027303">
    <property type="entry name" value="Gln_synth_gly_rich_site"/>
</dbReference>
<dbReference type="InterPro" id="IPR004809">
    <property type="entry name" value="Gln_synth_I"/>
</dbReference>
<dbReference type="InterPro" id="IPR027302">
    <property type="entry name" value="Gln_synth_N_conserv_site"/>
</dbReference>
<dbReference type="NCBIfam" id="TIGR00653">
    <property type="entry name" value="GlnA"/>
    <property type="match status" value="1"/>
</dbReference>
<dbReference type="PANTHER" id="PTHR43785">
    <property type="entry name" value="GAMMA-GLUTAMYLPUTRESCINE SYNTHETASE"/>
    <property type="match status" value="1"/>
</dbReference>
<dbReference type="PANTHER" id="PTHR43785:SF12">
    <property type="entry name" value="TYPE-1 GLUTAMINE SYNTHETASE 2"/>
    <property type="match status" value="1"/>
</dbReference>
<dbReference type="Pfam" id="PF00120">
    <property type="entry name" value="Gln-synt_C"/>
    <property type="match status" value="1"/>
</dbReference>
<dbReference type="Pfam" id="PF03951">
    <property type="entry name" value="Gln-synt_N"/>
    <property type="match status" value="1"/>
</dbReference>
<dbReference type="SMART" id="SM01230">
    <property type="entry name" value="Gln-synt_C"/>
    <property type="match status" value="1"/>
</dbReference>
<dbReference type="SUPFAM" id="SSF54368">
    <property type="entry name" value="Glutamine synthetase, N-terminal domain"/>
    <property type="match status" value="1"/>
</dbReference>
<dbReference type="SUPFAM" id="SSF55931">
    <property type="entry name" value="Glutamine synthetase/guanido kinase"/>
    <property type="match status" value="1"/>
</dbReference>
<dbReference type="PROSITE" id="PS00180">
    <property type="entry name" value="GLNA_1"/>
    <property type="match status" value="1"/>
</dbReference>
<dbReference type="PROSITE" id="PS00181">
    <property type="entry name" value="GLNA_ATP"/>
    <property type="match status" value="1"/>
</dbReference>
<dbReference type="PROSITE" id="PS51986">
    <property type="entry name" value="GS_BETA_GRASP"/>
    <property type="match status" value="1"/>
</dbReference>
<dbReference type="PROSITE" id="PS51987">
    <property type="entry name" value="GS_CATALYTIC"/>
    <property type="match status" value="1"/>
</dbReference>
<name>GLNA_METMP</name>
<sequence>MNAVEQAMEYIKTNNVKFIRFQFVDIHGEPKNIAYPVKAGAAGEEELYDVLEKGVYFDGSSIEGFVSIESSDMMLKPDLKTLSVLPWRPTEKSVARVICDVYTTNGKPFEGDPRGCLKRVLAKFDEELGGEFFVGPEPEFFILKEDACGSWVPADDAGYFDLEPLDGGCDIRRKIVFALENLGFHVEASHHEVAEGQHEVDFKFADAVKTADSVVTFKTTIKTLAAQDGLKATFMPKPFFGINGSGMHCHQSIWLNGEPSFYDESAQYQLSETCMSYVAGILDHAKSIVAVTNPTVNSYKRLVPGYEAPVNIAWANSNRSAIVRVPAPRGKGTRIEFRAPDPACNPYLAFTVMLAAGLDGVKRKLSAIEPVEKNIFAMSEAQKKAEGIESVPANLKAALDELENNSVLKDALGKHIFENFIEIKNAEWDSFRTAVTDWETKQYLKI</sequence>
<evidence type="ECO:0000250" key="1">
    <source>
        <dbReference type="UniProtKB" id="P0A1P6"/>
    </source>
</evidence>
<evidence type="ECO:0000250" key="2">
    <source>
        <dbReference type="UniProtKB" id="P12425"/>
    </source>
</evidence>
<evidence type="ECO:0000250" key="3">
    <source>
        <dbReference type="UniProtKB" id="P77961"/>
    </source>
</evidence>
<evidence type="ECO:0000250" key="4">
    <source>
        <dbReference type="UniProtKB" id="P9WN39"/>
    </source>
</evidence>
<evidence type="ECO:0000250" key="5">
    <source>
        <dbReference type="UniProtKB" id="Q9HH09"/>
    </source>
</evidence>
<evidence type="ECO:0000255" key="6">
    <source>
        <dbReference type="PROSITE-ProRule" id="PRU01330"/>
    </source>
</evidence>
<evidence type="ECO:0000255" key="7">
    <source>
        <dbReference type="PROSITE-ProRule" id="PRU01331"/>
    </source>
</evidence>
<keyword id="KW-0067">ATP-binding</keyword>
<keyword id="KW-0963">Cytoplasm</keyword>
<keyword id="KW-0436">Ligase</keyword>
<keyword id="KW-0460">Magnesium</keyword>
<keyword id="KW-0479">Metal-binding</keyword>
<keyword id="KW-0547">Nucleotide-binding</keyword>
<keyword id="KW-1185">Reference proteome</keyword>
<protein>
    <recommendedName>
        <fullName evidence="5">Glutamine synthetase</fullName>
        <shortName evidence="5">GS</shortName>
        <ecNumber evidence="5">6.3.1.2</ecNumber>
    </recommendedName>
    <alternativeName>
        <fullName evidence="5">Glutamate--ammonia ligase</fullName>
    </alternativeName>
    <alternativeName>
        <fullName evidence="5">Glutamine synthetase I alpha</fullName>
        <shortName evidence="5">GSI alpha</shortName>
    </alternativeName>
</protein>
<comment type="function">
    <text evidence="5">Probably involved in nitrogen metabolism via ammonium assimilation. Catalyzes the ATP-dependent biosynthesis of glutamine from glutamate and ammonia.</text>
</comment>
<comment type="catalytic activity">
    <reaction evidence="5">
        <text>L-glutamate + NH4(+) + ATP = L-glutamine + ADP + phosphate + H(+)</text>
        <dbReference type="Rhea" id="RHEA:16169"/>
        <dbReference type="ChEBI" id="CHEBI:15378"/>
        <dbReference type="ChEBI" id="CHEBI:28938"/>
        <dbReference type="ChEBI" id="CHEBI:29985"/>
        <dbReference type="ChEBI" id="CHEBI:30616"/>
        <dbReference type="ChEBI" id="CHEBI:43474"/>
        <dbReference type="ChEBI" id="CHEBI:58359"/>
        <dbReference type="ChEBI" id="CHEBI:456216"/>
        <dbReference type="EC" id="6.3.1.2"/>
    </reaction>
</comment>
<comment type="cofactor">
    <cofactor evidence="5">
        <name>Mg(2+)</name>
        <dbReference type="ChEBI" id="CHEBI:18420"/>
    </cofactor>
    <text evidence="4">Binds 2 Mg(2+) ions per subunit.</text>
</comment>
<comment type="subunit">
    <text evidence="5">Oligomer of 12 subunits arranged in the form of two hexagons.</text>
</comment>
<comment type="subcellular location">
    <subcellularLocation>
        <location evidence="5">Cytoplasm</location>
    </subcellularLocation>
</comment>
<comment type="similarity">
    <text evidence="5">Belongs to the glutamine synthetase family.</text>
</comment>
<organism>
    <name type="scientific">Methanococcus maripaludis (strain DSM 14266 / JCM 13030 / NBRC 101832 / S2 / LL)</name>
    <dbReference type="NCBI Taxonomy" id="267377"/>
    <lineage>
        <taxon>Archaea</taxon>
        <taxon>Methanobacteriati</taxon>
        <taxon>Methanobacteriota</taxon>
        <taxon>Methanomada group</taxon>
        <taxon>Methanococci</taxon>
        <taxon>Methanococcales</taxon>
        <taxon>Methanococcaceae</taxon>
        <taxon>Methanococcus</taxon>
    </lineage>
</organism>
<proteinExistence type="inferred from homology"/>
<accession>O59648</accession>